<keyword id="KW-0963">Cytoplasm</keyword>
<keyword id="KW-0342">GTP-binding</keyword>
<keyword id="KW-0460">Magnesium</keyword>
<keyword id="KW-0479">Metal-binding</keyword>
<keyword id="KW-0501">Molybdenum cofactor biosynthesis</keyword>
<keyword id="KW-0547">Nucleotide-binding</keyword>
<keyword id="KW-0808">Transferase</keyword>
<accession>A9VLC2</accession>
<feature type="chain" id="PRO_1000115791" description="Probable molybdenum cofactor guanylyltransferase">
    <location>
        <begin position="1"/>
        <end position="200"/>
    </location>
</feature>
<feature type="binding site" evidence="1">
    <location>
        <begin position="9"/>
        <end position="11"/>
    </location>
    <ligand>
        <name>GTP</name>
        <dbReference type="ChEBI" id="CHEBI:37565"/>
    </ligand>
</feature>
<feature type="binding site" evidence="1">
    <location>
        <position position="21"/>
    </location>
    <ligand>
        <name>GTP</name>
        <dbReference type="ChEBI" id="CHEBI:37565"/>
    </ligand>
</feature>
<feature type="binding site" evidence="1">
    <location>
        <position position="69"/>
    </location>
    <ligand>
        <name>GTP</name>
        <dbReference type="ChEBI" id="CHEBI:37565"/>
    </ligand>
</feature>
<feature type="binding site" evidence="1">
    <location>
        <position position="100"/>
    </location>
    <ligand>
        <name>GTP</name>
        <dbReference type="ChEBI" id="CHEBI:37565"/>
    </ligand>
</feature>
<feature type="binding site" evidence="1">
    <location>
        <position position="100"/>
    </location>
    <ligand>
        <name>Mg(2+)</name>
        <dbReference type="ChEBI" id="CHEBI:18420"/>
    </ligand>
</feature>
<name>MOBA_BACMK</name>
<gene>
    <name evidence="1" type="primary">mobA</name>
    <name type="ordered locus">BcerKBAB4_4590</name>
</gene>
<reference key="1">
    <citation type="journal article" date="2008" name="Chem. Biol. Interact.">
        <title>Extending the Bacillus cereus group genomics to putative food-borne pathogens of different toxicity.</title>
        <authorList>
            <person name="Lapidus A."/>
            <person name="Goltsman E."/>
            <person name="Auger S."/>
            <person name="Galleron N."/>
            <person name="Segurens B."/>
            <person name="Dossat C."/>
            <person name="Land M.L."/>
            <person name="Broussolle V."/>
            <person name="Brillard J."/>
            <person name="Guinebretiere M.-H."/>
            <person name="Sanchis V."/>
            <person name="Nguen-the C."/>
            <person name="Lereclus D."/>
            <person name="Richardson P."/>
            <person name="Wincker P."/>
            <person name="Weissenbach J."/>
            <person name="Ehrlich S.D."/>
            <person name="Sorokin A."/>
        </authorList>
    </citation>
    <scope>NUCLEOTIDE SEQUENCE [LARGE SCALE GENOMIC DNA]</scope>
    <source>
        <strain>KBAB4</strain>
    </source>
</reference>
<comment type="function">
    <text evidence="1">Transfers a GMP moiety from GTP to Mo-molybdopterin (Mo-MPT) cofactor (Moco or molybdenum cofactor) to form Mo-molybdopterin guanine dinucleotide (Mo-MGD) cofactor.</text>
</comment>
<comment type="catalytic activity">
    <reaction evidence="1">
        <text>Mo-molybdopterin + GTP + H(+) = Mo-molybdopterin guanine dinucleotide + diphosphate</text>
        <dbReference type="Rhea" id="RHEA:34243"/>
        <dbReference type="ChEBI" id="CHEBI:15378"/>
        <dbReference type="ChEBI" id="CHEBI:33019"/>
        <dbReference type="ChEBI" id="CHEBI:37565"/>
        <dbReference type="ChEBI" id="CHEBI:71302"/>
        <dbReference type="ChEBI" id="CHEBI:71310"/>
        <dbReference type="EC" id="2.7.7.77"/>
    </reaction>
</comment>
<comment type="cofactor">
    <cofactor evidence="1">
        <name>Mg(2+)</name>
        <dbReference type="ChEBI" id="CHEBI:18420"/>
    </cofactor>
</comment>
<comment type="subcellular location">
    <subcellularLocation>
        <location evidence="1">Cytoplasm</location>
    </subcellularLocation>
</comment>
<comment type="domain">
    <text evidence="1">The N-terminal domain determines nucleotide recognition and specific binding, while the C-terminal domain determines the specific binding to the target protein.</text>
</comment>
<comment type="similarity">
    <text evidence="1">Belongs to the MobA family.</text>
</comment>
<organism>
    <name type="scientific">Bacillus mycoides (strain KBAB4)</name>
    <name type="common">Bacillus weihenstephanensis</name>
    <dbReference type="NCBI Taxonomy" id="315730"/>
    <lineage>
        <taxon>Bacteria</taxon>
        <taxon>Bacillati</taxon>
        <taxon>Bacillota</taxon>
        <taxon>Bacilli</taxon>
        <taxon>Bacillales</taxon>
        <taxon>Bacillaceae</taxon>
        <taxon>Bacillus</taxon>
        <taxon>Bacillus cereus group</taxon>
    </lineage>
</organism>
<evidence type="ECO:0000255" key="1">
    <source>
        <dbReference type="HAMAP-Rule" id="MF_00316"/>
    </source>
</evidence>
<dbReference type="EC" id="2.7.7.77" evidence="1"/>
<dbReference type="EMBL" id="CP000903">
    <property type="protein sequence ID" value="ABY45746.1"/>
    <property type="molecule type" value="Genomic_DNA"/>
</dbReference>
<dbReference type="RefSeq" id="WP_002143477.1">
    <property type="nucleotide sequence ID" value="NC_010184.1"/>
</dbReference>
<dbReference type="SMR" id="A9VLC2"/>
<dbReference type="KEGG" id="bwe:BcerKBAB4_4590"/>
<dbReference type="eggNOG" id="COG0746">
    <property type="taxonomic scope" value="Bacteria"/>
</dbReference>
<dbReference type="HOGENOM" id="CLU_055597_2_0_9"/>
<dbReference type="Proteomes" id="UP000002154">
    <property type="component" value="Chromosome"/>
</dbReference>
<dbReference type="GO" id="GO:0005737">
    <property type="term" value="C:cytoplasm"/>
    <property type="evidence" value="ECO:0007669"/>
    <property type="project" value="UniProtKB-SubCell"/>
</dbReference>
<dbReference type="GO" id="GO:0005525">
    <property type="term" value="F:GTP binding"/>
    <property type="evidence" value="ECO:0007669"/>
    <property type="project" value="UniProtKB-UniRule"/>
</dbReference>
<dbReference type="GO" id="GO:0046872">
    <property type="term" value="F:metal ion binding"/>
    <property type="evidence" value="ECO:0007669"/>
    <property type="project" value="UniProtKB-KW"/>
</dbReference>
<dbReference type="GO" id="GO:0061603">
    <property type="term" value="F:molybdenum cofactor guanylyltransferase activity"/>
    <property type="evidence" value="ECO:0007669"/>
    <property type="project" value="UniProtKB-EC"/>
</dbReference>
<dbReference type="GO" id="GO:0006777">
    <property type="term" value="P:Mo-molybdopterin cofactor biosynthetic process"/>
    <property type="evidence" value="ECO:0007669"/>
    <property type="project" value="UniProtKB-KW"/>
</dbReference>
<dbReference type="CDD" id="cd02503">
    <property type="entry name" value="MobA"/>
    <property type="match status" value="1"/>
</dbReference>
<dbReference type="Gene3D" id="3.90.550.10">
    <property type="entry name" value="Spore Coat Polysaccharide Biosynthesis Protein SpsA, Chain A"/>
    <property type="match status" value="1"/>
</dbReference>
<dbReference type="HAMAP" id="MF_00316">
    <property type="entry name" value="MobA"/>
    <property type="match status" value="1"/>
</dbReference>
<dbReference type="InterPro" id="IPR025877">
    <property type="entry name" value="MobA-like_NTP_Trfase"/>
</dbReference>
<dbReference type="InterPro" id="IPR013482">
    <property type="entry name" value="Molybde_CF_guanTrfase"/>
</dbReference>
<dbReference type="InterPro" id="IPR029044">
    <property type="entry name" value="Nucleotide-diphossugar_trans"/>
</dbReference>
<dbReference type="PANTHER" id="PTHR19136">
    <property type="entry name" value="MOLYBDENUM COFACTOR GUANYLYLTRANSFERASE"/>
    <property type="match status" value="1"/>
</dbReference>
<dbReference type="PANTHER" id="PTHR19136:SF81">
    <property type="entry name" value="MOLYBDENUM COFACTOR GUANYLYLTRANSFERASE"/>
    <property type="match status" value="1"/>
</dbReference>
<dbReference type="Pfam" id="PF12804">
    <property type="entry name" value="NTP_transf_3"/>
    <property type="match status" value="1"/>
</dbReference>
<dbReference type="SUPFAM" id="SSF53448">
    <property type="entry name" value="Nucleotide-diphospho-sugar transferases"/>
    <property type="match status" value="1"/>
</dbReference>
<protein>
    <recommendedName>
        <fullName evidence="1">Probable molybdenum cofactor guanylyltransferase</fullName>
        <shortName evidence="1">MoCo guanylyltransferase</shortName>
        <ecNumber evidence="1">2.7.7.77</ecNumber>
    </recommendedName>
    <alternativeName>
        <fullName evidence="1">GTP:molybdopterin guanylyltransferase</fullName>
    </alternativeName>
    <alternativeName>
        <fullName evidence="1">Mo-MPT guanylyltransferase</fullName>
    </alternativeName>
    <alternativeName>
        <fullName evidence="1">Molybdopterin guanylyltransferase</fullName>
    </alternativeName>
    <alternativeName>
        <fullName evidence="1">Molybdopterin-guanine dinucleotide synthase</fullName>
        <shortName evidence="1">MGD synthase</shortName>
    </alternativeName>
</protein>
<proteinExistence type="inferred from homology"/>
<sequence>MSKCAGIVLAGGMSSRFGEPKALVGWKESTFIEHIVKVMESAVQEIVVISHTDIKERVEQLVQVPVIEDMSHYKGNGPLAGIVSGMEYIDSDWYIIMPCDAPNVSNEWITILLEQTSNEYDAVVPIINGRKQPLLAAYHNRVKEKIYALLQEEKRSMGQLLSQCNVKYIAGEDVQANVDWFINVNTKEEYVQAQKDLSNE</sequence>